<gene>
    <name type="primary">Raf1</name>
    <name type="synonym">Craf</name>
</gene>
<dbReference type="EC" id="2.7.11.1" evidence="2"/>
<dbReference type="EMBL" id="AB057655">
    <property type="protein sequence ID" value="BAB39748.1"/>
    <property type="molecule type" value="mRNA"/>
</dbReference>
<dbReference type="EMBL" id="AB057663">
    <property type="protein sequence ID" value="BAB39743.2"/>
    <property type="molecule type" value="mRNA"/>
</dbReference>
<dbReference type="EMBL" id="AK141745">
    <property type="protein sequence ID" value="BAE24820.1"/>
    <property type="molecule type" value="mRNA"/>
</dbReference>
<dbReference type="EMBL" id="BC015273">
    <property type="protein sequence ID" value="AAH15273.1"/>
    <property type="molecule type" value="mRNA"/>
</dbReference>
<dbReference type="EMBL" id="BC092040">
    <property type="protein sequence ID" value="AAH92040.1"/>
    <property type="molecule type" value="mRNA"/>
</dbReference>
<dbReference type="EMBL" id="X55432">
    <property type="status" value="NOT_ANNOTATED_CDS"/>
    <property type="molecule type" value="Genomic_DNA"/>
</dbReference>
<dbReference type="CCDS" id="CCDS20441.1">
    <molecule id="Q99N57-1"/>
</dbReference>
<dbReference type="RefSeq" id="NP_001343262.1">
    <molecule id="Q99N57-2"/>
    <property type="nucleotide sequence ID" value="NM_001356333.2"/>
</dbReference>
<dbReference type="RefSeq" id="NP_001343263.1">
    <molecule id="Q99N57-1"/>
    <property type="nucleotide sequence ID" value="NM_001356334.2"/>
</dbReference>
<dbReference type="RefSeq" id="NP_084056.1">
    <molecule id="Q99N57-1"/>
    <property type="nucleotide sequence ID" value="NM_029780.4"/>
</dbReference>
<dbReference type="RefSeq" id="XP_006505426.1">
    <property type="nucleotide sequence ID" value="XM_006505363.3"/>
</dbReference>
<dbReference type="RefSeq" id="XP_006505427.1">
    <molecule id="Q99N57-2"/>
    <property type="nucleotide sequence ID" value="XM_006505364.3"/>
</dbReference>
<dbReference type="RefSeq" id="XP_006505428.1">
    <property type="nucleotide sequence ID" value="XM_006505365.2"/>
</dbReference>
<dbReference type="BMRB" id="Q99N57"/>
<dbReference type="SMR" id="Q99N57"/>
<dbReference type="BioGRID" id="225343">
    <property type="interactions" value="20"/>
</dbReference>
<dbReference type="CORUM" id="Q99N57"/>
<dbReference type="DIP" id="DIP-31555N"/>
<dbReference type="FunCoup" id="Q99N57">
    <property type="interactions" value="4961"/>
</dbReference>
<dbReference type="IntAct" id="Q99N57">
    <property type="interactions" value="16"/>
</dbReference>
<dbReference type="MINT" id="Q99N57"/>
<dbReference type="STRING" id="10090.ENSMUSP00000000451"/>
<dbReference type="BindingDB" id="Q99N57"/>
<dbReference type="ChEMBL" id="CHEMBL3804748"/>
<dbReference type="GlyGen" id="Q99N57">
    <property type="glycosylation" value="2 sites, 1 N-linked glycan (1 site)"/>
</dbReference>
<dbReference type="iPTMnet" id="Q99N57"/>
<dbReference type="PhosphoSitePlus" id="Q99N57"/>
<dbReference type="SwissPalm" id="Q99N57"/>
<dbReference type="jPOST" id="Q99N57"/>
<dbReference type="PaxDb" id="10090-ENSMUSP00000000451"/>
<dbReference type="PeptideAtlas" id="Q99N57"/>
<dbReference type="ProteomicsDB" id="254892">
    <molecule id="Q99N57-1"/>
</dbReference>
<dbReference type="ProteomicsDB" id="254893">
    <molecule id="Q99N57-2"/>
</dbReference>
<dbReference type="Pumba" id="Q99N57"/>
<dbReference type="Antibodypedia" id="1131">
    <property type="antibodies" value="3125 antibodies from 51 providers"/>
</dbReference>
<dbReference type="DNASU" id="110157"/>
<dbReference type="Ensembl" id="ENSMUST00000000451.14">
    <molecule id="Q99N57-1"/>
    <property type="protein sequence ID" value="ENSMUSP00000000451.8"/>
    <property type="gene ID" value="ENSMUSG00000000441.18"/>
</dbReference>
<dbReference type="Ensembl" id="ENSMUST00000112949.8">
    <molecule id="Q99N57-1"/>
    <property type="protein sequence ID" value="ENSMUSP00000108571.2"/>
    <property type="gene ID" value="ENSMUSG00000000441.18"/>
</dbReference>
<dbReference type="GeneID" id="110157"/>
<dbReference type="KEGG" id="mmu:110157"/>
<dbReference type="UCSC" id="uc009dix.1">
    <molecule id="Q99N57-1"/>
    <property type="organism name" value="mouse"/>
</dbReference>
<dbReference type="AGR" id="MGI:97847"/>
<dbReference type="CTD" id="5894"/>
<dbReference type="MGI" id="MGI:97847">
    <property type="gene designation" value="Raf1"/>
</dbReference>
<dbReference type="VEuPathDB" id="HostDB:ENSMUSG00000000441"/>
<dbReference type="eggNOG" id="KOG0193">
    <property type="taxonomic scope" value="Eukaryota"/>
</dbReference>
<dbReference type="GeneTree" id="ENSGT00940000156084"/>
<dbReference type="HOGENOM" id="CLU_023684_1_1_1"/>
<dbReference type="InParanoid" id="Q99N57"/>
<dbReference type="OMA" id="SAYKRHA"/>
<dbReference type="PhylomeDB" id="Q99N57"/>
<dbReference type="TreeFam" id="TF317006"/>
<dbReference type="Reactome" id="R-MMU-2672351">
    <property type="pathway name" value="Stimuli-sensing channels"/>
</dbReference>
<dbReference type="Reactome" id="R-MMU-392517">
    <property type="pathway name" value="Rap1 signalling"/>
</dbReference>
<dbReference type="Reactome" id="R-MMU-430116">
    <property type="pathway name" value="GP1b-IX-V activation signalling"/>
</dbReference>
<dbReference type="Reactome" id="R-MMU-5621575">
    <property type="pathway name" value="CD209 (DC-SIGN) signaling"/>
</dbReference>
<dbReference type="Reactome" id="R-MMU-5673000">
    <property type="pathway name" value="RAF activation"/>
</dbReference>
<dbReference type="Reactome" id="R-MMU-5674135">
    <property type="pathway name" value="MAP2K and MAPK activation"/>
</dbReference>
<dbReference type="Reactome" id="R-MMU-5674499">
    <property type="pathway name" value="Negative feedback regulation of MAPK pathway"/>
</dbReference>
<dbReference type="Reactome" id="R-MMU-5675221">
    <property type="pathway name" value="Negative regulation of MAPK pathway"/>
</dbReference>
<dbReference type="Reactome" id="R-MMU-9732724">
    <property type="pathway name" value="IFNG signaling activates MAPKs"/>
</dbReference>
<dbReference type="BioGRID-ORCS" id="110157">
    <property type="hits" value="10 hits in 80 CRISPR screens"/>
</dbReference>
<dbReference type="ChiTaRS" id="Raf1">
    <property type="organism name" value="mouse"/>
</dbReference>
<dbReference type="PRO" id="PR:Q99N57"/>
<dbReference type="Proteomes" id="UP000000589">
    <property type="component" value="Chromosome 6"/>
</dbReference>
<dbReference type="RNAct" id="Q99N57">
    <property type="molecule type" value="protein"/>
</dbReference>
<dbReference type="Bgee" id="ENSMUSG00000000441">
    <property type="expression patterns" value="Expressed in granulocyte and 264 other cell types or tissues"/>
</dbReference>
<dbReference type="ExpressionAtlas" id="Q99N57">
    <property type="expression patterns" value="baseline and differential"/>
</dbReference>
<dbReference type="GO" id="GO:0005737">
    <property type="term" value="C:cytoplasm"/>
    <property type="evidence" value="ECO:0000250"/>
    <property type="project" value="UniProtKB"/>
</dbReference>
<dbReference type="GO" id="GO:0005829">
    <property type="term" value="C:cytosol"/>
    <property type="evidence" value="ECO:0000304"/>
    <property type="project" value="MGI"/>
</dbReference>
<dbReference type="GO" id="GO:0005794">
    <property type="term" value="C:Golgi apparatus"/>
    <property type="evidence" value="ECO:0000266"/>
    <property type="project" value="MGI"/>
</dbReference>
<dbReference type="GO" id="GO:0005739">
    <property type="term" value="C:mitochondrion"/>
    <property type="evidence" value="ECO:0007669"/>
    <property type="project" value="UniProtKB-SubCell"/>
</dbReference>
<dbReference type="GO" id="GO:0005634">
    <property type="term" value="C:nucleus"/>
    <property type="evidence" value="ECO:0007669"/>
    <property type="project" value="UniProtKB-SubCell"/>
</dbReference>
<dbReference type="GO" id="GO:0005886">
    <property type="term" value="C:plasma membrane"/>
    <property type="evidence" value="ECO:0000250"/>
    <property type="project" value="UniProtKB"/>
</dbReference>
<dbReference type="GO" id="GO:0031143">
    <property type="term" value="C:pseudopodium"/>
    <property type="evidence" value="ECO:0000314"/>
    <property type="project" value="UniProtKB"/>
</dbReference>
<dbReference type="GO" id="GO:0010856">
    <property type="term" value="F:adenylate cyclase activator activity"/>
    <property type="evidence" value="ECO:0007669"/>
    <property type="project" value="Ensembl"/>
</dbReference>
<dbReference type="GO" id="GO:0005524">
    <property type="term" value="F:ATP binding"/>
    <property type="evidence" value="ECO:0007669"/>
    <property type="project" value="UniProtKB-KW"/>
</dbReference>
<dbReference type="GO" id="GO:0042802">
    <property type="term" value="F:identical protein binding"/>
    <property type="evidence" value="ECO:0007669"/>
    <property type="project" value="Ensembl"/>
</dbReference>
<dbReference type="GO" id="GO:0004709">
    <property type="term" value="F:MAP kinase kinase kinase activity"/>
    <property type="evidence" value="ECO:0000314"/>
    <property type="project" value="MGI"/>
</dbReference>
<dbReference type="GO" id="GO:0004672">
    <property type="term" value="F:protein kinase activity"/>
    <property type="evidence" value="ECO:0000304"/>
    <property type="project" value="MGI"/>
</dbReference>
<dbReference type="GO" id="GO:0106310">
    <property type="term" value="F:protein serine kinase activity"/>
    <property type="evidence" value="ECO:0007669"/>
    <property type="project" value="RHEA"/>
</dbReference>
<dbReference type="GO" id="GO:0004674">
    <property type="term" value="F:protein serine/threonine kinase activity"/>
    <property type="evidence" value="ECO:0000315"/>
    <property type="project" value="MGI"/>
</dbReference>
<dbReference type="GO" id="GO:0031267">
    <property type="term" value="F:small GTPase binding"/>
    <property type="evidence" value="ECO:0000353"/>
    <property type="project" value="MGI"/>
</dbReference>
<dbReference type="GO" id="GO:0008270">
    <property type="term" value="F:zinc ion binding"/>
    <property type="evidence" value="ECO:0007669"/>
    <property type="project" value="UniProtKB-KW"/>
</dbReference>
<dbReference type="GO" id="GO:0030154">
    <property type="term" value="P:cell differentiation"/>
    <property type="evidence" value="ECO:0000316"/>
    <property type="project" value="MGI"/>
</dbReference>
<dbReference type="GO" id="GO:0071550">
    <property type="term" value="P:death-inducing signaling complex assembly"/>
    <property type="evidence" value="ECO:0000315"/>
    <property type="project" value="MGI"/>
</dbReference>
<dbReference type="GO" id="GO:0038133">
    <property type="term" value="P:ERBB2-ERBB3 signaling pathway"/>
    <property type="evidence" value="ECO:0000314"/>
    <property type="project" value="MGI"/>
</dbReference>
<dbReference type="GO" id="GO:0008625">
    <property type="term" value="P:extrinsic apoptotic signaling pathway via death domain receptors"/>
    <property type="evidence" value="ECO:0000315"/>
    <property type="project" value="MGI"/>
</dbReference>
<dbReference type="GO" id="GO:0060324">
    <property type="term" value="P:face development"/>
    <property type="evidence" value="ECO:0000316"/>
    <property type="project" value="MGI"/>
</dbReference>
<dbReference type="GO" id="GO:0008286">
    <property type="term" value="P:insulin receptor signaling pathway"/>
    <property type="evidence" value="ECO:0000314"/>
    <property type="project" value="MGI"/>
</dbReference>
<dbReference type="GO" id="GO:0035773">
    <property type="term" value="P:insulin secretion involved in cellular response to glucose stimulus"/>
    <property type="evidence" value="ECO:0000315"/>
    <property type="project" value="MGI"/>
</dbReference>
<dbReference type="GO" id="GO:0048009">
    <property type="term" value="P:insulin-like growth factor receptor signaling pathway"/>
    <property type="evidence" value="ECO:0000314"/>
    <property type="project" value="MGI"/>
</dbReference>
<dbReference type="GO" id="GO:0045104">
    <property type="term" value="P:intermediate filament cytoskeleton organization"/>
    <property type="evidence" value="ECO:0000315"/>
    <property type="project" value="MGI"/>
</dbReference>
<dbReference type="GO" id="GO:0001678">
    <property type="term" value="P:intracellular glucose homeostasis"/>
    <property type="evidence" value="ECO:0000315"/>
    <property type="project" value="MGI"/>
</dbReference>
<dbReference type="GO" id="GO:0035556">
    <property type="term" value="P:intracellular signal transduction"/>
    <property type="evidence" value="ECO:0000304"/>
    <property type="project" value="MGI"/>
</dbReference>
<dbReference type="GO" id="GO:0000165">
    <property type="term" value="P:MAPK cascade"/>
    <property type="evidence" value="ECO:0000266"/>
    <property type="project" value="MGI"/>
</dbReference>
<dbReference type="GO" id="GO:0042552">
    <property type="term" value="P:myelination"/>
    <property type="evidence" value="ECO:0000315"/>
    <property type="project" value="MGI"/>
</dbReference>
<dbReference type="GO" id="GO:0008285">
    <property type="term" value="P:negative regulation of cell population proliferation"/>
    <property type="evidence" value="ECO:0007669"/>
    <property type="project" value="Ensembl"/>
</dbReference>
<dbReference type="GO" id="GO:1902042">
    <property type="term" value="P:negative regulation of extrinsic apoptotic signaling pathway via death domain receptors"/>
    <property type="evidence" value="ECO:0000315"/>
    <property type="project" value="MGI"/>
</dbReference>
<dbReference type="GO" id="GO:0031333">
    <property type="term" value="P:negative regulation of protein-containing complex assembly"/>
    <property type="evidence" value="ECO:0007669"/>
    <property type="project" value="Ensembl"/>
</dbReference>
<dbReference type="GO" id="GO:0048011">
    <property type="term" value="P:neurotrophin TRK receptor signaling pathway"/>
    <property type="evidence" value="ECO:0000315"/>
    <property type="project" value="MGI"/>
</dbReference>
<dbReference type="GO" id="GO:0043410">
    <property type="term" value="P:positive regulation of MAPK cascade"/>
    <property type="evidence" value="ECO:0007669"/>
    <property type="project" value="Ensembl"/>
</dbReference>
<dbReference type="GO" id="GO:0045944">
    <property type="term" value="P:positive regulation of transcription by RNA polymerase II"/>
    <property type="evidence" value="ECO:0000315"/>
    <property type="project" value="MGI"/>
</dbReference>
<dbReference type="GO" id="GO:0035994">
    <property type="term" value="P:response to muscle stretch"/>
    <property type="evidence" value="ECO:0000315"/>
    <property type="project" value="MGI"/>
</dbReference>
<dbReference type="GO" id="GO:0014044">
    <property type="term" value="P:Schwann cell development"/>
    <property type="evidence" value="ECO:0000315"/>
    <property type="project" value="MGI"/>
</dbReference>
<dbReference type="GO" id="GO:0035019">
    <property type="term" value="P:somatic stem cell population maintenance"/>
    <property type="evidence" value="ECO:0000316"/>
    <property type="project" value="MGI"/>
</dbReference>
<dbReference type="GO" id="GO:0048538">
    <property type="term" value="P:thymus development"/>
    <property type="evidence" value="ECO:0000316"/>
    <property type="project" value="MGI"/>
</dbReference>
<dbReference type="GO" id="GO:0030878">
    <property type="term" value="P:thyroid gland development"/>
    <property type="evidence" value="ECO:0000316"/>
    <property type="project" value="MGI"/>
</dbReference>
<dbReference type="GO" id="GO:0044342">
    <property type="term" value="P:type B pancreatic cell proliferation"/>
    <property type="evidence" value="ECO:0000315"/>
    <property type="project" value="MGI"/>
</dbReference>
<dbReference type="CDD" id="cd20870">
    <property type="entry name" value="C1_A_C-Raf"/>
    <property type="match status" value="1"/>
</dbReference>
<dbReference type="CDD" id="cd17135">
    <property type="entry name" value="RBD_CRAF"/>
    <property type="match status" value="1"/>
</dbReference>
<dbReference type="CDD" id="cd14149">
    <property type="entry name" value="STKc_C-Raf"/>
    <property type="match status" value="1"/>
</dbReference>
<dbReference type="FunFam" id="3.10.20.90:FF:000015">
    <property type="entry name" value="B-Raf proto-oncogene serine/threonine-protein kinase"/>
    <property type="match status" value="1"/>
</dbReference>
<dbReference type="FunFam" id="3.30.200.20:FF:000024">
    <property type="entry name" value="B-Raf proto-oncogene serine/threonine-protein kinase"/>
    <property type="match status" value="1"/>
</dbReference>
<dbReference type="FunFam" id="3.30.60.20:FF:000004">
    <property type="entry name" value="B-Raf proto-oncogene serine/threonine-protein kinase"/>
    <property type="match status" value="1"/>
</dbReference>
<dbReference type="FunFam" id="1.10.510.10:FF:000036">
    <property type="entry name" value="RAF proto-oncogene serine/threonine-protein kinase"/>
    <property type="match status" value="1"/>
</dbReference>
<dbReference type="Gene3D" id="3.30.60.20">
    <property type="match status" value="1"/>
</dbReference>
<dbReference type="Gene3D" id="3.10.20.90">
    <property type="entry name" value="Phosphatidylinositol 3-kinase Catalytic Subunit, Chain A, domain 1"/>
    <property type="match status" value="1"/>
</dbReference>
<dbReference type="Gene3D" id="3.30.200.20">
    <property type="entry name" value="Phosphorylase Kinase, domain 1"/>
    <property type="match status" value="1"/>
</dbReference>
<dbReference type="Gene3D" id="1.10.510.10">
    <property type="entry name" value="Transferase(Phosphotransferase) domain 1"/>
    <property type="match status" value="1"/>
</dbReference>
<dbReference type="InterPro" id="IPR046349">
    <property type="entry name" value="C1-like_sf"/>
</dbReference>
<dbReference type="InterPro" id="IPR020454">
    <property type="entry name" value="DAG/PE-bd"/>
</dbReference>
<dbReference type="InterPro" id="IPR011009">
    <property type="entry name" value="Kinase-like_dom_sf"/>
</dbReference>
<dbReference type="InterPro" id="IPR002219">
    <property type="entry name" value="PE/DAG-bd"/>
</dbReference>
<dbReference type="InterPro" id="IPR000719">
    <property type="entry name" value="Prot_kinase_dom"/>
</dbReference>
<dbReference type="InterPro" id="IPR017441">
    <property type="entry name" value="Protein_kinase_ATP_BS"/>
</dbReference>
<dbReference type="InterPro" id="IPR003116">
    <property type="entry name" value="RBD_dom"/>
</dbReference>
<dbReference type="InterPro" id="IPR008271">
    <property type="entry name" value="Ser/Thr_kinase_AS"/>
</dbReference>
<dbReference type="InterPro" id="IPR051681">
    <property type="entry name" value="Ser/Thr_Kinases-Pseudokinases"/>
</dbReference>
<dbReference type="InterPro" id="IPR029071">
    <property type="entry name" value="Ubiquitin-like_domsf"/>
</dbReference>
<dbReference type="PANTHER" id="PTHR44329:SF22">
    <property type="entry name" value="RAF PROTO-ONCOGENE SERINE_THREONINE-PROTEIN KINASE"/>
    <property type="match status" value="1"/>
</dbReference>
<dbReference type="PANTHER" id="PTHR44329">
    <property type="entry name" value="SERINE/THREONINE-PROTEIN KINASE TNNI3K-RELATED"/>
    <property type="match status" value="1"/>
</dbReference>
<dbReference type="Pfam" id="PF00130">
    <property type="entry name" value="C1_1"/>
    <property type="match status" value="1"/>
</dbReference>
<dbReference type="Pfam" id="PF00069">
    <property type="entry name" value="Pkinase"/>
    <property type="match status" value="1"/>
</dbReference>
<dbReference type="Pfam" id="PF02196">
    <property type="entry name" value="RBD"/>
    <property type="match status" value="1"/>
</dbReference>
<dbReference type="PRINTS" id="PR00008">
    <property type="entry name" value="DAGPEDOMAIN"/>
</dbReference>
<dbReference type="SMART" id="SM00109">
    <property type="entry name" value="C1"/>
    <property type="match status" value="1"/>
</dbReference>
<dbReference type="SMART" id="SM00455">
    <property type="entry name" value="RBD"/>
    <property type="match status" value="1"/>
</dbReference>
<dbReference type="SMART" id="SM00220">
    <property type="entry name" value="S_TKc"/>
    <property type="match status" value="1"/>
</dbReference>
<dbReference type="SUPFAM" id="SSF57889">
    <property type="entry name" value="Cysteine-rich domain"/>
    <property type="match status" value="1"/>
</dbReference>
<dbReference type="SUPFAM" id="SSF56112">
    <property type="entry name" value="Protein kinase-like (PK-like)"/>
    <property type="match status" value="1"/>
</dbReference>
<dbReference type="SUPFAM" id="SSF54236">
    <property type="entry name" value="Ubiquitin-like"/>
    <property type="match status" value="1"/>
</dbReference>
<dbReference type="PROSITE" id="PS00107">
    <property type="entry name" value="PROTEIN_KINASE_ATP"/>
    <property type="match status" value="1"/>
</dbReference>
<dbReference type="PROSITE" id="PS50011">
    <property type="entry name" value="PROTEIN_KINASE_DOM"/>
    <property type="match status" value="1"/>
</dbReference>
<dbReference type="PROSITE" id="PS00108">
    <property type="entry name" value="PROTEIN_KINASE_ST"/>
    <property type="match status" value="1"/>
</dbReference>
<dbReference type="PROSITE" id="PS50898">
    <property type="entry name" value="RBD"/>
    <property type="match status" value="1"/>
</dbReference>
<dbReference type="PROSITE" id="PS00479">
    <property type="entry name" value="ZF_DAG_PE_1"/>
    <property type="match status" value="1"/>
</dbReference>
<dbReference type="PROSITE" id="PS50081">
    <property type="entry name" value="ZF_DAG_PE_2"/>
    <property type="match status" value="1"/>
</dbReference>
<organism>
    <name type="scientific">Mus musculus</name>
    <name type="common">Mouse</name>
    <dbReference type="NCBI Taxonomy" id="10090"/>
    <lineage>
        <taxon>Eukaryota</taxon>
        <taxon>Metazoa</taxon>
        <taxon>Chordata</taxon>
        <taxon>Craniata</taxon>
        <taxon>Vertebrata</taxon>
        <taxon>Euteleostomi</taxon>
        <taxon>Mammalia</taxon>
        <taxon>Eutheria</taxon>
        <taxon>Euarchontoglires</taxon>
        <taxon>Glires</taxon>
        <taxon>Rodentia</taxon>
        <taxon>Myomorpha</taxon>
        <taxon>Muroidea</taxon>
        <taxon>Muridae</taxon>
        <taxon>Murinae</taxon>
        <taxon>Mus</taxon>
        <taxon>Mus</taxon>
    </lineage>
</organism>
<accession>Q99N57</accession>
<accession>Q3UR68</accession>
<accession>Q58E75</accession>
<accession>Q91WH1</accession>
<accession>Q99N58</accession>
<accession>Q9QUU8</accession>
<proteinExistence type="evidence at protein level"/>
<name>RAF1_MOUSE</name>
<protein>
    <recommendedName>
        <fullName>RAF proto-oncogene serine/threonine-protein kinase</fullName>
        <ecNumber evidence="2">2.7.11.1</ecNumber>
    </recommendedName>
    <alternativeName>
        <fullName>Proto-oncogene c-RAF</fullName>
        <shortName>cRaf</shortName>
    </alternativeName>
    <alternativeName>
        <fullName>Raf-1</fullName>
    </alternativeName>
</protein>
<keyword id="KW-0025">Alternative splicing</keyword>
<keyword id="KW-0067">ATP-binding</keyword>
<keyword id="KW-1003">Cell membrane</keyword>
<keyword id="KW-0963">Cytoplasm</keyword>
<keyword id="KW-0418">Kinase</keyword>
<keyword id="KW-0472">Membrane</keyword>
<keyword id="KW-0479">Metal-binding</keyword>
<keyword id="KW-0488">Methylation</keyword>
<keyword id="KW-0496">Mitochondrion</keyword>
<keyword id="KW-0547">Nucleotide-binding</keyword>
<keyword id="KW-0539">Nucleus</keyword>
<keyword id="KW-0597">Phosphoprotein</keyword>
<keyword id="KW-0656">Proto-oncogene</keyword>
<keyword id="KW-1185">Reference proteome</keyword>
<keyword id="KW-0723">Serine/threonine-protein kinase</keyword>
<keyword id="KW-0808">Transferase</keyword>
<keyword id="KW-0862">Zinc</keyword>
<keyword id="KW-0863">Zinc-finger</keyword>
<evidence type="ECO:0000250" key="1"/>
<evidence type="ECO:0000250" key="2">
    <source>
        <dbReference type="UniProtKB" id="P04049"/>
    </source>
</evidence>
<evidence type="ECO:0000250" key="3">
    <source>
        <dbReference type="UniProtKB" id="P11345"/>
    </source>
</evidence>
<evidence type="ECO:0000255" key="4">
    <source>
        <dbReference type="PROSITE-ProRule" id="PRU00159"/>
    </source>
</evidence>
<evidence type="ECO:0000255" key="5">
    <source>
        <dbReference type="PROSITE-ProRule" id="PRU00226"/>
    </source>
</evidence>
<evidence type="ECO:0000255" key="6">
    <source>
        <dbReference type="PROSITE-ProRule" id="PRU00262"/>
    </source>
</evidence>
<evidence type="ECO:0000255" key="7">
    <source>
        <dbReference type="PROSITE-ProRule" id="PRU10027"/>
    </source>
</evidence>
<evidence type="ECO:0000256" key="8">
    <source>
        <dbReference type="SAM" id="MobiDB-lite"/>
    </source>
</evidence>
<evidence type="ECO:0000269" key="9">
    <source>
    </source>
</evidence>
<evidence type="ECO:0000269" key="10">
    <source>
    </source>
</evidence>
<evidence type="ECO:0000269" key="11">
    <source>
    </source>
</evidence>
<evidence type="ECO:0000269" key="12">
    <source>
    </source>
</evidence>
<evidence type="ECO:0000269" key="13">
    <source>
    </source>
</evidence>
<evidence type="ECO:0000305" key="14"/>
<evidence type="ECO:0007744" key="15">
    <source>
    </source>
</evidence>
<reference key="1">
    <citation type="journal article" date="2001" name="Genomics">
        <title>Phylogenetic conservation of the makorin-2 gene, encoding a multiple zinc-finger protein, antisense to the raf1 proto-oncogene.</title>
        <authorList>
            <person name="Gray T.A."/>
            <person name="Azama K."/>
            <person name="Whitmore K."/>
            <person name="Min A."/>
            <person name="Abe S."/>
            <person name="Nicholls R.D."/>
        </authorList>
    </citation>
    <scope>NUCLEOTIDE SEQUENCE [MRNA] (ISOFORM 1)</scope>
    <scope>TISSUE SPECIFICITY</scope>
    <source>
        <tissue>Liver</tissue>
    </source>
</reference>
<reference key="2">
    <citation type="journal article" date="2005" name="Science">
        <title>The transcriptional landscape of the mammalian genome.</title>
        <authorList>
            <person name="Carninci P."/>
            <person name="Kasukawa T."/>
            <person name="Katayama S."/>
            <person name="Gough J."/>
            <person name="Frith M.C."/>
            <person name="Maeda N."/>
            <person name="Oyama R."/>
            <person name="Ravasi T."/>
            <person name="Lenhard B."/>
            <person name="Wells C."/>
            <person name="Kodzius R."/>
            <person name="Shimokawa K."/>
            <person name="Bajic V.B."/>
            <person name="Brenner S.E."/>
            <person name="Batalov S."/>
            <person name="Forrest A.R."/>
            <person name="Zavolan M."/>
            <person name="Davis M.J."/>
            <person name="Wilming L.G."/>
            <person name="Aidinis V."/>
            <person name="Allen J.E."/>
            <person name="Ambesi-Impiombato A."/>
            <person name="Apweiler R."/>
            <person name="Aturaliya R.N."/>
            <person name="Bailey T.L."/>
            <person name="Bansal M."/>
            <person name="Baxter L."/>
            <person name="Beisel K.W."/>
            <person name="Bersano T."/>
            <person name="Bono H."/>
            <person name="Chalk A.M."/>
            <person name="Chiu K.P."/>
            <person name="Choudhary V."/>
            <person name="Christoffels A."/>
            <person name="Clutterbuck D.R."/>
            <person name="Crowe M.L."/>
            <person name="Dalla E."/>
            <person name="Dalrymple B.P."/>
            <person name="de Bono B."/>
            <person name="Della Gatta G."/>
            <person name="di Bernardo D."/>
            <person name="Down T."/>
            <person name="Engstrom P."/>
            <person name="Fagiolini M."/>
            <person name="Faulkner G."/>
            <person name="Fletcher C.F."/>
            <person name="Fukushima T."/>
            <person name="Furuno M."/>
            <person name="Futaki S."/>
            <person name="Gariboldi M."/>
            <person name="Georgii-Hemming P."/>
            <person name="Gingeras T.R."/>
            <person name="Gojobori T."/>
            <person name="Green R.E."/>
            <person name="Gustincich S."/>
            <person name="Harbers M."/>
            <person name="Hayashi Y."/>
            <person name="Hensch T.K."/>
            <person name="Hirokawa N."/>
            <person name="Hill D."/>
            <person name="Huminiecki L."/>
            <person name="Iacono M."/>
            <person name="Ikeo K."/>
            <person name="Iwama A."/>
            <person name="Ishikawa T."/>
            <person name="Jakt M."/>
            <person name="Kanapin A."/>
            <person name="Katoh M."/>
            <person name="Kawasawa Y."/>
            <person name="Kelso J."/>
            <person name="Kitamura H."/>
            <person name="Kitano H."/>
            <person name="Kollias G."/>
            <person name="Krishnan S.P."/>
            <person name="Kruger A."/>
            <person name="Kummerfeld S.K."/>
            <person name="Kurochkin I.V."/>
            <person name="Lareau L.F."/>
            <person name="Lazarevic D."/>
            <person name="Lipovich L."/>
            <person name="Liu J."/>
            <person name="Liuni S."/>
            <person name="McWilliam S."/>
            <person name="Madan Babu M."/>
            <person name="Madera M."/>
            <person name="Marchionni L."/>
            <person name="Matsuda H."/>
            <person name="Matsuzawa S."/>
            <person name="Miki H."/>
            <person name="Mignone F."/>
            <person name="Miyake S."/>
            <person name="Morris K."/>
            <person name="Mottagui-Tabar S."/>
            <person name="Mulder N."/>
            <person name="Nakano N."/>
            <person name="Nakauchi H."/>
            <person name="Ng P."/>
            <person name="Nilsson R."/>
            <person name="Nishiguchi S."/>
            <person name="Nishikawa S."/>
            <person name="Nori F."/>
            <person name="Ohara O."/>
            <person name="Okazaki Y."/>
            <person name="Orlando V."/>
            <person name="Pang K.C."/>
            <person name="Pavan W.J."/>
            <person name="Pavesi G."/>
            <person name="Pesole G."/>
            <person name="Petrovsky N."/>
            <person name="Piazza S."/>
            <person name="Reed J."/>
            <person name="Reid J.F."/>
            <person name="Ring B.Z."/>
            <person name="Ringwald M."/>
            <person name="Rost B."/>
            <person name="Ruan Y."/>
            <person name="Salzberg S.L."/>
            <person name="Sandelin A."/>
            <person name="Schneider C."/>
            <person name="Schoenbach C."/>
            <person name="Sekiguchi K."/>
            <person name="Semple C.A."/>
            <person name="Seno S."/>
            <person name="Sessa L."/>
            <person name="Sheng Y."/>
            <person name="Shibata Y."/>
            <person name="Shimada H."/>
            <person name="Shimada K."/>
            <person name="Silva D."/>
            <person name="Sinclair B."/>
            <person name="Sperling S."/>
            <person name="Stupka E."/>
            <person name="Sugiura K."/>
            <person name="Sultana R."/>
            <person name="Takenaka Y."/>
            <person name="Taki K."/>
            <person name="Tammoja K."/>
            <person name="Tan S.L."/>
            <person name="Tang S."/>
            <person name="Taylor M.S."/>
            <person name="Tegner J."/>
            <person name="Teichmann S.A."/>
            <person name="Ueda H.R."/>
            <person name="van Nimwegen E."/>
            <person name="Verardo R."/>
            <person name="Wei C.L."/>
            <person name="Yagi K."/>
            <person name="Yamanishi H."/>
            <person name="Zabarovsky E."/>
            <person name="Zhu S."/>
            <person name="Zimmer A."/>
            <person name="Hide W."/>
            <person name="Bult C."/>
            <person name="Grimmond S.M."/>
            <person name="Teasdale R.D."/>
            <person name="Liu E.T."/>
            <person name="Brusic V."/>
            <person name="Quackenbush J."/>
            <person name="Wahlestedt C."/>
            <person name="Mattick J.S."/>
            <person name="Hume D.A."/>
            <person name="Kai C."/>
            <person name="Sasaki D."/>
            <person name="Tomaru Y."/>
            <person name="Fukuda S."/>
            <person name="Kanamori-Katayama M."/>
            <person name="Suzuki M."/>
            <person name="Aoki J."/>
            <person name="Arakawa T."/>
            <person name="Iida J."/>
            <person name="Imamura K."/>
            <person name="Itoh M."/>
            <person name="Kato T."/>
            <person name="Kawaji H."/>
            <person name="Kawagashira N."/>
            <person name="Kawashima T."/>
            <person name="Kojima M."/>
            <person name="Kondo S."/>
            <person name="Konno H."/>
            <person name="Nakano K."/>
            <person name="Ninomiya N."/>
            <person name="Nishio T."/>
            <person name="Okada M."/>
            <person name="Plessy C."/>
            <person name="Shibata K."/>
            <person name="Shiraki T."/>
            <person name="Suzuki S."/>
            <person name="Tagami M."/>
            <person name="Waki K."/>
            <person name="Watahiki A."/>
            <person name="Okamura-Oho Y."/>
            <person name="Suzuki H."/>
            <person name="Kawai J."/>
            <person name="Hayashizaki Y."/>
        </authorList>
    </citation>
    <scope>NUCLEOTIDE SEQUENCE [LARGE SCALE MRNA] (ISOFORM 1)</scope>
    <source>
        <strain>C57BL/6J</strain>
        <tissue>Embryo</tissue>
    </source>
</reference>
<reference key="3">
    <citation type="journal article" date="2004" name="Genome Res.">
        <title>The status, quality, and expansion of the NIH full-length cDNA project: the Mammalian Gene Collection (MGC).</title>
        <authorList>
            <consortium name="The MGC Project Team"/>
        </authorList>
    </citation>
    <scope>NUCLEOTIDE SEQUENCE [LARGE SCALE MRNA] (ISOFORM 1)</scope>
    <source>
        <strain>Czech II</strain>
        <strain>FVB/N</strain>
        <tissue>Kidney</tissue>
        <tissue>Mammary tumor</tissue>
    </source>
</reference>
<reference key="4">
    <citation type="journal article" date="1991" name="Oncogene">
        <title>An alternatively spliced c-mil/raf mRNA is predominantly expressed in chicken muscular tissues and conserved among vertebrate species.</title>
        <authorList>
            <person name="Dozier C."/>
            <person name="Ansieau S."/>
            <person name="Ferreira E."/>
            <person name="Coll J."/>
            <person name="Stehelin D."/>
        </authorList>
    </citation>
    <scope>PARTIAL NUCLEOTIDE SEQUENCE [GENOMIC DNA]</scope>
    <scope>ALTERNATIVE SPLICING</scope>
    <scope>TISSUE SPECIFICITY</scope>
</reference>
<reference key="5">
    <citation type="journal article" date="2005" name="J. Cell Biol.">
        <title>Raf-1 regulates Rho signaling and cell migration.</title>
        <authorList>
            <person name="Ehrenreiter K."/>
            <person name="Piazzolla D."/>
            <person name="Velamoor V."/>
            <person name="Sobczak I."/>
            <person name="Small J.V."/>
            <person name="Takeda J."/>
            <person name="Leung T."/>
            <person name="Baccarini M."/>
        </authorList>
    </citation>
    <scope>FUNCTION</scope>
    <scope>INTERACTION WITH ROCK2</scope>
</reference>
<reference key="6">
    <citation type="journal article" date="2005" name="Mol. Cell">
        <title>Regulation of Raf-1 by direct feedback phosphorylation.</title>
        <authorList>
            <person name="Dougherty M.K."/>
            <person name="Muller J."/>
            <person name="Ritt D.A."/>
            <person name="Zhou M."/>
            <person name="Zhou X.Z."/>
            <person name="Copeland T.D."/>
            <person name="Conrads T.P."/>
            <person name="Veenstra T.D."/>
            <person name="Lu K.P."/>
            <person name="Morrison D.K."/>
        </authorList>
    </citation>
    <scope>PHOSPHORYLATION AT SER-29; SER-43; SER-259; SER-289; SER-296; SER-301; SER-338; SER-621 AND SER-642</scope>
    <scope>ACTIVITY REGULATION</scope>
    <scope>INTERACTION WITH PIN1; PPP2CA AND PPP2R1B</scope>
</reference>
<reference key="7">
    <citation type="journal article" date="2007" name="Proc. Natl. Acad. Sci. U.S.A.">
        <title>Large-scale phosphorylation analysis of mouse liver.</title>
        <authorList>
            <person name="Villen J."/>
            <person name="Beausoleil S.A."/>
            <person name="Gerber S.A."/>
            <person name="Gygi S.P."/>
        </authorList>
    </citation>
    <scope>IDENTIFICATION BY MASS SPECTROMETRY [LARGE SCALE ANALYSIS]</scope>
    <source>
        <tissue>Liver</tissue>
    </source>
</reference>
<reference key="8">
    <citation type="journal article" date="2009" name="Exp. Cell Res.">
        <title>Retinoic acid induces nuclear accumulation of Raf1 during differentiation of HL-60 cells.</title>
        <authorList>
            <person name="Smith J."/>
            <person name="Bunaciu R.P."/>
            <person name="Reiterer G."/>
            <person name="Coder D."/>
            <person name="George T."/>
            <person name="Asaly M."/>
            <person name="Yen A."/>
        </authorList>
    </citation>
    <scope>SUBCELLULAR LOCATION</scope>
</reference>
<reference key="9">
    <citation type="journal article" date="2010" name="Cell">
        <title>A tissue-specific atlas of mouse protein phosphorylation and expression.</title>
        <authorList>
            <person name="Huttlin E.L."/>
            <person name="Jedrychowski M.P."/>
            <person name="Elias J.E."/>
            <person name="Goswami T."/>
            <person name="Rad R."/>
            <person name="Beausoleil S.A."/>
            <person name="Villen J."/>
            <person name="Haas W."/>
            <person name="Sowa M.E."/>
            <person name="Gygi S.P."/>
        </authorList>
    </citation>
    <scope>PHOSPHORYLATION [LARGE SCALE ANALYSIS] AT SER-296; SER-301 AND SER-642</scope>
    <scope>IDENTIFICATION BY MASS SPECTROMETRY [LARGE SCALE ANALYSIS]</scope>
    <source>
        <tissue>Brain</tissue>
        <tissue>Brown adipose tissue</tissue>
        <tissue>Heart</tissue>
        <tissue>Kidney</tissue>
        <tissue>Pancreas</tissue>
        <tissue>Spleen</tissue>
        <tissue>Testis</tissue>
    </source>
</reference>
<sequence>MEHIQGAWKTISNGFGLKDAVFDGSSCISPTIVQQFGYQRRASDDGKLTDSSKTSNTIRVFLPNKQRTVVNVRNGMSLHDCLMKALKVRGLQPECCAVFRLLQEHKGKKARLDWNTDAASLIGEELQVDFLDHVPLTTHNFARKTFLKLAFCDICQKFLLNGFRCQTCGYKFHEHCSTKVPTMCVDWSNIRQLLLFPNSTVGDSGVPAPPSFPMRRMRESVSRMPASSQHRYSTPHAFTFNTSSPSSEGSLSQRQRSTSTPNVHMVSTTLHVDSRMIEDAIRSHSESASPSALSSSPNNLSPTGWSQPKTPVPAQRERAPGSGTQEKNKIRPRGQRDSSYYWEIEASEVMLSTRIGSGSFGTVYKGKWHGDVAVKILKVVDPTPEQLQAFRNEVAVLRKTRHVNILLFMGYMTKDNLAIVTQWCEGSSLYKHLHVQETKFQMFQLIDIARQTAQGMDYLHAKNIIHRDMKSNNIFLHEGLTVKIGDFGLATVKSRWSGSQQVEQPTGSVLWMAPEVIRMQDDNPFSFQSDVYSYGIVLYELMAGELPYAHINNRDQIIFMVGRGYASPDLSRLYKNCPKAMKRLVADCVKKVKEERPLFPQILSSIELLQHSLPKINRSASEPSLHRAAHTEDINACTLTTSPRLPVF</sequence>
<comment type="function">
    <text evidence="2 11">Serine/threonine-protein kinase that acts as a regulatory link between the membrane-associated Ras GTPases and the MAPK/ERK cascade, and this critical regulatory link functions as a switch determining cell fate decisions including proliferation, differentiation, apoptosis, survival and oncogenic transformation. RAF1 activation initiates a mitogen-activated protein kinase (MAPK) cascade that comprises a sequential phosphorylation of the dual-specific MAPK kinases (MAP2K1/MEK1 and MAP2K2/MEK2) and the extracellular signal-regulated kinases (MAPK3/ERK1 and MAPK1/ERK2). The phosphorylated form of RAF1 (on residues Ser-338 and Ser-339, by PAK1) phosphorylates BAD/Bcl2-antagonist of cell death at 'Ser-75'. Phosphorylates adenylyl cyclases: ADCY2, ADCY5 and ADCY6, resulting in their activation. Phosphorylates PPP1R12A resulting in inhibition of the phosphatase activity. Phosphorylates TNNT2/cardiac muscle troponin T. Can promote NF-kB activation and inhibit signal transducers involved in motility (ROCK2), apoptosis (MAP3K5/ASK1 and STK3/MST2), proliferation and angiogenesis (RB1). Can protect cells from apoptosis also by translocating to the mitochondria where it binds BCL2 and displaces BAD/Bcl2-antagonist of cell death. Plays a role in the oncogenic transformation of epithelial cells via repression of the TJ protein, occludin (OCLN) by inducing the up-regulation of a transcriptional repressor SNAI2/SLUG, which induces down-regulation of OCLN. Restricts caspase activation in response to selected stimuli, notably Fas stimulation, pathogen-mediated macrophage apoptosis, and erythroid differentiation (By similarity). Regulates Rho signaling and migration, and is required for normal wound healing.</text>
</comment>
<comment type="catalytic activity">
    <reaction evidence="2">
        <text>L-seryl-[protein] + ATP = O-phospho-L-seryl-[protein] + ADP + H(+)</text>
        <dbReference type="Rhea" id="RHEA:17989"/>
        <dbReference type="Rhea" id="RHEA-COMP:9863"/>
        <dbReference type="Rhea" id="RHEA-COMP:11604"/>
        <dbReference type="ChEBI" id="CHEBI:15378"/>
        <dbReference type="ChEBI" id="CHEBI:29999"/>
        <dbReference type="ChEBI" id="CHEBI:30616"/>
        <dbReference type="ChEBI" id="CHEBI:83421"/>
        <dbReference type="ChEBI" id="CHEBI:456216"/>
        <dbReference type="EC" id="2.7.11.1"/>
    </reaction>
    <physiologicalReaction direction="left-to-right" evidence="2">
        <dbReference type="Rhea" id="RHEA:17990"/>
    </physiologicalReaction>
</comment>
<comment type="catalytic activity">
    <reaction evidence="2">
        <text>L-threonyl-[protein] + ATP = O-phospho-L-threonyl-[protein] + ADP + H(+)</text>
        <dbReference type="Rhea" id="RHEA:46608"/>
        <dbReference type="Rhea" id="RHEA-COMP:11060"/>
        <dbReference type="Rhea" id="RHEA-COMP:11605"/>
        <dbReference type="ChEBI" id="CHEBI:15378"/>
        <dbReference type="ChEBI" id="CHEBI:30013"/>
        <dbReference type="ChEBI" id="CHEBI:30616"/>
        <dbReference type="ChEBI" id="CHEBI:61977"/>
        <dbReference type="ChEBI" id="CHEBI:456216"/>
        <dbReference type="EC" id="2.7.11.1"/>
    </reaction>
    <physiologicalReaction direction="left-to-right" evidence="2">
        <dbReference type="Rhea" id="RHEA:46609"/>
    </physiologicalReaction>
</comment>
<comment type="cofactor">
    <cofactor evidence="1">
        <name>Zn(2+)</name>
        <dbReference type="ChEBI" id="CHEBI:29105"/>
    </cofactor>
    <text evidence="1">Binds 2 Zn(2+) ions per subunit.</text>
</comment>
<comment type="activity regulation">
    <text evidence="1">Regulation is a highly complex process involving membrane recruitment, protein-protein interactions, dimerization, and phosphorylation/dephosphorylation events. Ras-GTP recruits RAF1 to the membrane, thereby promoting its activation. The inactive conformation of RAF1 is maintained by autoinhibitory interactions occurring between the N-terminal regulatory and the C-terminal catalytic domains and by the binding of a 14-3-3 protein that contacts two phosphorylation sites, Ser-259 and Ser-621. Upon mitogenic stimulation, Ras and PPP2R1A cooperate to release autoinhibition and the subsequent phosphorylation of activating sites: Ser-338, Tyr-341, Thr-491, and Ser-494, yields a fully active kinase. Through a negative feedback mechanism involving MAPK1/ERK2, RAF1 is phosphorylated on Ser-29, Ser-43, Ser-289, Ser-296, Ser-301 and Ser-642 by MAPK1/ERK2, which yields an inactive, desensitized kinase. The signaling-competent conformation of RAF1 is finally re-established by the coordinated action of PIN1, a prolyl isomerase that converts pSer and pThr residues from the cis to the trans conformation, which is preferentially recognized and dephosphorylated by PPP2R1A. Activated by homodimerization and heterodimerization (with BRAF). Also regulated through association with other proteins such as KSR2, CNKSR1/CNK1, PEBP1/RKIP, PHB/prohibitin and SPRY4. PEBP1/RKIP acts by dissociating RAF1 from its substrates MAP2K1/MEK1 and MAP2K2/MEK2. PHB/prohibitin facilitates the displacement of 14-3-3 from RAF1 by activated Ras, thereby promoting cell membrane localization and phosphorylation of RAF1 at the activating Ser-338. SPRY4 inhibits Ras-independent, but not Ras-dependent, activation of RAF1. CNKSR1/CNK1 regulates Src-mediated RAF1 activation (By similarity).</text>
</comment>
<comment type="subunit">
    <text evidence="2 3 10 11">Monomer (By similarity). Homodimer (By similarity). Heterodimerizes with BRAF and this heterodimer possesses a highly increased kinase activity compared to the respective homodimers or monomers (By similarity). Heterodimerization is mitogen-regulated and enhanced by 14-3-3 proteins (By similarity). MAPK1/ERK2 activation can induce a negative feedback that promotes the dissociation of the heterodimer (By similarity). Forms a multiprotein complex with Ras (M-Ras/MRAS), SHOC2 and protein phosphatase 1 (PPP1CA, PPP1CB and PPP1CC) (By similarity). Interacts with LZTR1 (By similarity). Interacts with Ras proteins; the interaction is antagonized by RIN1 (By similarity). Weakly interacts with RIT1 (By similarity). Interacts (via N-terminus) with RGS14 (via RBD domains); the interaction mediates the formation of a ternary complex with BRAF, a ternary complex inhibited by GNAI1 (By similarity). Probably forms a complex composed of chaperones HSP90 and HSP70, co-chaperones CDC37, PPP5C, TSC1 and client protein TSC2, CDK4, AKT, RAF1 and NR3C1; this complex does not contain co-chaperones STIP1/HOP and PTGES3/p23 (By similarity). Interacts with STK3/MST2; the interaction inhibits its pro-apoptotic activity (By similarity). Interacts (when phosphorylated at Ser-259) with YWHAZ (unphosphorylated at 'Thr-232') (By similarity). Interacts with MAP2K1/MEK1 and MAP2K2/MEK2 (By similarity). Interacts with MAP3K5/ASF1 (via N-terminus) and this interaction inhibits the proapoptotic function of MAP3K5/ASK1 (By similarity). Interacts with PAK1 (via kinase domain) (By similarity). The Ser-338 and Ser-339 phosphorylated form (by PAK1) interacts with BCL2 (By similarity). Interacts with PEBP1/RKIP and this interaction is enhanced if RAF1 is phosphorylated on residues Ser-338, Ser-339, Tyr-340 and Tyr-341 (By similarity). Interacts with ADCY2, ADCY5, ADCY6, DGKH, RCAN1/DSCR1, PPP1R12A, PKB/AKT1, SPRY2, SPRY4, CNKSR1/CNK1, KSR2 and PHB/prohibitin (By similarity). The phosphorylated form interacts with PIN1 (PubMed:15664191). Interacts with PPP2CA, PPP2R1B and ROCK2 (PubMed:15664191, PubMed:15753127). In its active form, interacts with PRMT5 (By similarity). Interacts with FAM83B; displaces 14-3-3 proteins from RAF1 and activates RAF1 (By similarity). Interacts with PDE8A; the interaction promotes RAF1 activity (By similarity). Interacts with MFHAS1 (By similarity). Interacts with GLS (By similarity). Interacts with NEK10 and MAP2K1; the interaction is direct with NEK10 and required for ERK1/2-signaling pathway activation in response to UV irradiation (By similarity).</text>
</comment>
<comment type="interaction">
    <interactant intactId="EBI-397757">
        <id>Q99N57</id>
    </interactant>
    <interactant intactId="EBI-2584830">
        <id>P28028</id>
        <label>Braf</label>
    </interactant>
    <organismsDiffer>false</organismsDiffer>
    <experiments>2</experiments>
</comment>
<comment type="interaction">
    <interactant intactId="EBI-397757">
        <id>Q99N57</id>
    </interactant>
    <interactant intactId="EBI-644285">
        <id>P32883-2</id>
        <label>Kras</label>
    </interactant>
    <organismsDiffer>false</organismsDiffer>
    <experiments>3</experiments>
</comment>
<comment type="interaction">
    <interactant intactId="EBI-397757">
        <id>Q99N57</id>
    </interactant>
    <interactant intactId="EBI-8046183">
        <id>Q8CFI0</id>
        <label>Nedd4l</label>
    </interactant>
    <organismsDiffer>false</organismsDiffer>
    <experiments>2</experiments>
</comment>
<comment type="interaction">
    <interactant intactId="EBI-397757">
        <id>Q99N57</id>
    </interactant>
    <interactant intactId="EBI-15591730">
        <id>Q9WVC6</id>
        <label>Sgk1</label>
    </interactant>
    <organismsDiffer>false</organismsDiffer>
    <experiments>2</experiments>
</comment>
<comment type="interaction">
    <interactant intactId="EBI-397757">
        <id>Q99N57</id>
    </interactant>
    <interactant intactId="EBI-15771036">
        <id>Q9Z2S7-3</id>
        <label>Tsc22d3</label>
    </interactant>
    <organismsDiffer>false</organismsDiffer>
    <experiments>2</experiments>
</comment>
<comment type="interaction">
    <interactant intactId="EBI-397757">
        <id>Q99N57</id>
    </interactant>
    <interactant intactId="EBI-365980">
        <id>P15056</id>
        <label>BRAF</label>
    </interactant>
    <organismsDiffer>true</organismsDiffer>
    <experiments>3</experiments>
</comment>
<comment type="interaction">
    <interactant intactId="EBI-397757">
        <id>Q99N57</id>
    </interactant>
    <interactant intactId="EBI-721993">
        <id>P01111</id>
        <label>NRAS</label>
    </interactant>
    <organismsDiffer>true</organismsDiffer>
    <experiments>2</experiments>
</comment>
<comment type="subcellular location">
    <subcellularLocation>
        <location evidence="1">Cytoplasm</location>
    </subcellularLocation>
    <subcellularLocation>
        <location evidence="1">Cell membrane</location>
    </subcellularLocation>
    <subcellularLocation>
        <location evidence="1">Mitochondrion</location>
    </subcellularLocation>
    <subcellularLocation>
        <location evidence="13">Nucleus</location>
    </subcellularLocation>
    <text evidence="1">Colocalizes with RGS14 and BRAF in both the cytoplasm and membranes. Phosphorylation at Ser-259 impairs its membrane accumulation. Recruited to the cell membrane by the active Ras protein. Phosphorylation at Ser-338 and Ser-339 by PAK1 is required for its mitochondrial localization (By similarity). Retinoic acid-induced Ser-621 phosphorylated form of RAF1 is predominantly localized at the nucleus.</text>
</comment>
<comment type="alternative products">
    <event type="alternative splicing"/>
    <isoform>
        <id>Q99N57-1</id>
        <name>1</name>
        <name>6C</name>
        <sequence type="displayed"/>
    </isoform>
    <isoform>
        <id>Q99N57-2</id>
        <name>2</name>
        <name>1A</name>
        <sequence type="described" ref="VSP_034629"/>
    </isoform>
</comment>
<comment type="tissue specificity">
    <text evidence="9 12">Present in all tissues tested: testis, ovary, small intestine, colon, peripheral blood leukocytes, fetal liver, bone marrow, thymus, lymph node and spleen, and the cell lines melanoma G-361, lung carcinoma A-549, colorectal adenocarcinoma SW480, Burkitt's lymphoma Raji and lymphoblastic leukemia MOLT-4. In skeletal muscle, isoform 1 is more abundant than isoform 2.</text>
</comment>
<comment type="PTM">
    <text evidence="2">Phosphorylation at Thr-269, Ser-338, Tyr-341, Thr-491 and Ser-494 results in its activation. Phosphorylation at Ser-29, Ser-43, Ser-289, Ser-296, Ser-301 and Ser-642 by MAPK1/ERK2 results in its inactivation. Phosphorylation at Ser-259 induces the interaction with YWHAZ and inactivates kinase activity. Dephosphorylation of Ser-259 by the SHOC2-MRAS-PP1c (SMP) complex consisting of SHOC2, GTP-bound M-Ras/MRAS and the catalytic subunit of protein phosphatase 1 (PPP1CA, PPP1CB or PPP1CC); this relieves inactivation and stimulates kinase activity (By similarity). Phosphorylation at Ser-338 by PAK1 and PAK5 and Ser-339 by PAK1 is required for its mitochondrial localization (By similarity). Phosphorylation at Ser-621 in response to growth factor treatment stabilizes the protein, possibly by preventing proteasomal degradation. Phosphorylation at Ser-289, Ser-296, Ser-301, Ser-338 and Ser-621 are somehow linked to the methylation potential of cells. Treatment of cells with HGF in the presence of the methylation inhibitor 5'-methylthioadenosine (MTA) results in increased phosphorylation at Ser-338 and Ser-621 and decreased phosphorylation at Ser-296, Ser-301 and Ser-338. Dephosphorylation at Ser-338 by PPP5C results in a decreased of activity (By similarity).</text>
</comment>
<comment type="PTM">
    <text evidence="2">Methylated at Arg-563 in response to EGF treatment. This modification leads to destabilization of the protein, possibly through proteasomal degradation.</text>
</comment>
<comment type="similarity">
    <text evidence="14">Belongs to the protein kinase superfamily. TKL Ser/Thr protein kinase family. RAF subfamily.</text>
</comment>
<feature type="chain" id="PRO_0000086597" description="RAF proto-oncogene serine/threonine-protein kinase">
    <location>
        <begin position="1"/>
        <end position="648"/>
    </location>
</feature>
<feature type="domain" description="RBD" evidence="6">
    <location>
        <begin position="56"/>
        <end position="131"/>
    </location>
</feature>
<feature type="domain" description="Protein kinase" evidence="4">
    <location>
        <begin position="349"/>
        <end position="609"/>
    </location>
</feature>
<feature type="zinc finger region" description="Phorbol-ester/DAG-type" evidence="5">
    <location>
        <begin position="138"/>
        <end position="184"/>
    </location>
</feature>
<feature type="region of interest" description="Disordered" evidence="8">
    <location>
        <begin position="205"/>
        <end position="265"/>
    </location>
</feature>
<feature type="region of interest" description="Disordered" evidence="8">
    <location>
        <begin position="281"/>
        <end position="335"/>
    </location>
</feature>
<feature type="region of interest" description="Interaction with PEBP1/RKIP" evidence="1">
    <location>
        <begin position="331"/>
        <end position="349"/>
    </location>
</feature>
<feature type="compositionally biased region" description="Polar residues" evidence="8">
    <location>
        <begin position="239"/>
        <end position="265"/>
    </location>
</feature>
<feature type="compositionally biased region" description="Low complexity" evidence="8">
    <location>
        <begin position="286"/>
        <end position="301"/>
    </location>
</feature>
<feature type="active site" description="Proton acceptor" evidence="4 7">
    <location>
        <position position="468"/>
    </location>
</feature>
<feature type="binding site" evidence="1">
    <location>
        <position position="139"/>
    </location>
    <ligand>
        <name>Zn(2+)</name>
        <dbReference type="ChEBI" id="CHEBI:29105"/>
        <label>1</label>
    </ligand>
</feature>
<feature type="binding site" evidence="1">
    <location>
        <position position="152"/>
    </location>
    <ligand>
        <name>Zn(2+)</name>
        <dbReference type="ChEBI" id="CHEBI:29105"/>
        <label>2</label>
    </ligand>
</feature>
<feature type="binding site" evidence="1">
    <location>
        <position position="155"/>
    </location>
    <ligand>
        <name>Zn(2+)</name>
        <dbReference type="ChEBI" id="CHEBI:29105"/>
        <label>2</label>
    </ligand>
</feature>
<feature type="binding site" evidence="1">
    <location>
        <position position="165"/>
    </location>
    <ligand>
        <name>Zn(2+)</name>
        <dbReference type="ChEBI" id="CHEBI:29105"/>
        <label>1</label>
    </ligand>
</feature>
<feature type="binding site" evidence="1">
    <location>
        <position position="168"/>
    </location>
    <ligand>
        <name>Zn(2+)</name>
        <dbReference type="ChEBI" id="CHEBI:29105"/>
        <label>1</label>
    </ligand>
</feature>
<feature type="binding site" evidence="1">
    <location>
        <position position="173"/>
    </location>
    <ligand>
        <name>Zn(2+)</name>
        <dbReference type="ChEBI" id="CHEBI:29105"/>
        <label>2</label>
    </ligand>
</feature>
<feature type="binding site" evidence="1">
    <location>
        <position position="176"/>
    </location>
    <ligand>
        <name>Zn(2+)</name>
        <dbReference type="ChEBI" id="CHEBI:29105"/>
        <label>2</label>
    </ligand>
</feature>
<feature type="binding site" evidence="1">
    <location>
        <position position="184"/>
    </location>
    <ligand>
        <name>Zn(2+)</name>
        <dbReference type="ChEBI" id="CHEBI:29105"/>
        <label>1</label>
    </ligand>
</feature>
<feature type="binding site" evidence="4">
    <location>
        <begin position="355"/>
        <end position="363"/>
    </location>
    <ligand>
        <name>ATP</name>
        <dbReference type="ChEBI" id="CHEBI:30616"/>
    </ligand>
</feature>
<feature type="binding site" evidence="4">
    <location>
        <position position="375"/>
    </location>
    <ligand>
        <name>ATP</name>
        <dbReference type="ChEBI" id="CHEBI:30616"/>
    </ligand>
</feature>
<feature type="modified residue" description="Phosphoserine; by MAPK1" evidence="10">
    <location>
        <position position="29"/>
    </location>
</feature>
<feature type="modified residue" description="Phosphoserine; by PKA and MAPK1" evidence="10">
    <location>
        <position position="43"/>
    </location>
</feature>
<feature type="modified residue" description="Phosphoserine; by PKA" evidence="2">
    <location>
        <position position="233"/>
    </location>
</feature>
<feature type="modified residue" description="Phosphoserine" evidence="2">
    <location>
        <position position="252"/>
    </location>
</feature>
<feature type="modified residue" description="Phosphoserine; by PKA, PKC and PKB/AKT1" evidence="2">
    <location>
        <position position="259"/>
    </location>
</feature>
<feature type="modified residue" description="Phosphothreonine; by autocatalysis" evidence="2">
    <location>
        <position position="268"/>
    </location>
</feature>
<feature type="modified residue" description="Phosphothreonine; by PKA" evidence="2">
    <location>
        <position position="269"/>
    </location>
</feature>
<feature type="modified residue" description="Phosphoserine; by MAPK1" evidence="10">
    <location>
        <position position="289"/>
    </location>
</feature>
<feature type="modified residue" description="Phosphoserine; by MAPK1" evidence="10 15">
    <location>
        <position position="296"/>
    </location>
</feature>
<feature type="modified residue" description="Phosphoserine; by MAPK1" evidence="10 15">
    <location>
        <position position="301"/>
    </location>
</feature>
<feature type="modified residue" description="Phosphoserine; by PAK1, PAK2, PAK3 and PAK5" evidence="2">
    <location>
        <position position="338"/>
    </location>
</feature>
<feature type="modified residue" description="Phosphoserine; by PAK1, PAK2 and PAK3" evidence="2">
    <location>
        <position position="339"/>
    </location>
</feature>
<feature type="modified residue" description="Phosphotyrosine; by SRC" evidence="2">
    <location>
        <position position="340"/>
    </location>
</feature>
<feature type="modified residue" description="Phosphotyrosine; by SRC" evidence="2">
    <location>
        <position position="341"/>
    </location>
</feature>
<feature type="modified residue" description="Phosphoserine" evidence="2">
    <location>
        <position position="471"/>
    </location>
</feature>
<feature type="modified residue" description="Phosphothreonine" evidence="2">
    <location>
        <position position="491"/>
    </location>
</feature>
<feature type="modified residue" description="Phosphoserine" evidence="2">
    <location>
        <position position="494"/>
    </location>
</feature>
<feature type="modified residue" description="Phosphoserine; by PKC" evidence="2">
    <location>
        <position position="497"/>
    </location>
</feature>
<feature type="modified residue" description="Phosphoserine; by PKC" evidence="2">
    <location>
        <position position="499"/>
    </location>
</feature>
<feature type="modified residue" description="Symmetric dimethylarginine; by PRMT5" evidence="2">
    <location>
        <position position="563"/>
    </location>
</feature>
<feature type="modified residue" description="Phosphoserine" evidence="10">
    <location>
        <position position="621"/>
    </location>
</feature>
<feature type="modified residue" description="Phosphoserine; by MAPK1" evidence="10 15">
    <location>
        <position position="642"/>
    </location>
</feature>
<feature type="splice variant" id="VSP_034629" description="In isoform 2." evidence="14">
    <original>E</original>
    <variation>ESNSLNASPRACSRRFCLRGR</variation>
    <location>
        <position position="278"/>
    </location>
</feature>
<feature type="sequence conflict" description="In Ref. 3; AAH92040." evidence="14" ref="3">
    <original>D</original>
    <variation>N</variation>
    <location>
        <position position="522"/>
    </location>
</feature>
<feature type="sequence conflict" description="In Ref. 3; AAH92040." evidence="14" ref="3">
    <original>A</original>
    <variation>T</variation>
    <location>
        <position position="543"/>
    </location>
</feature>